<evidence type="ECO:0000255" key="1">
    <source>
        <dbReference type="HAMAP-Rule" id="MF_01006"/>
    </source>
</evidence>
<comment type="function">
    <text evidence="1">Catalyzes the dephosphorylation of undecaprenyl diphosphate (UPP). Confers resistance to bacitracin.</text>
</comment>
<comment type="catalytic activity">
    <reaction evidence="1">
        <text>di-trans,octa-cis-undecaprenyl diphosphate + H2O = di-trans,octa-cis-undecaprenyl phosphate + phosphate + H(+)</text>
        <dbReference type="Rhea" id="RHEA:28094"/>
        <dbReference type="ChEBI" id="CHEBI:15377"/>
        <dbReference type="ChEBI" id="CHEBI:15378"/>
        <dbReference type="ChEBI" id="CHEBI:43474"/>
        <dbReference type="ChEBI" id="CHEBI:58405"/>
        <dbReference type="ChEBI" id="CHEBI:60392"/>
        <dbReference type="EC" id="3.6.1.27"/>
    </reaction>
</comment>
<comment type="subcellular location">
    <subcellularLocation>
        <location evidence="1">Cell membrane</location>
        <topology evidence="1">Multi-pass membrane protein</topology>
    </subcellularLocation>
</comment>
<comment type="miscellaneous">
    <text>Bacitracin is thought to be involved in the inhibition of peptidoglycan synthesis by sequestering undecaprenyl diphosphate, thereby reducing the pool of lipid carrier available.</text>
</comment>
<comment type="similarity">
    <text evidence="1">Belongs to the UppP family.</text>
</comment>
<protein>
    <recommendedName>
        <fullName evidence="1">Undecaprenyl-diphosphatase</fullName>
        <ecNumber evidence="1">3.6.1.27</ecNumber>
    </recommendedName>
    <alternativeName>
        <fullName evidence="1">Bacitracin resistance protein</fullName>
    </alternativeName>
    <alternativeName>
        <fullName evidence="1">Undecaprenyl pyrophosphate phosphatase</fullName>
    </alternativeName>
</protein>
<name>UPPP_CHRFK</name>
<accession>A0M5T6</accession>
<dbReference type="EC" id="3.6.1.27" evidence="1"/>
<dbReference type="EMBL" id="CU207366">
    <property type="protein sequence ID" value="CAL67981.1"/>
    <property type="molecule type" value="Genomic_DNA"/>
</dbReference>
<dbReference type="RefSeq" id="WP_011710882.1">
    <property type="nucleotide sequence ID" value="NC_008571.1"/>
</dbReference>
<dbReference type="SMR" id="A0M5T6"/>
<dbReference type="STRING" id="411154.GFO_3037"/>
<dbReference type="KEGG" id="gfo:GFO_3037"/>
<dbReference type="eggNOG" id="COG1968">
    <property type="taxonomic scope" value="Bacteria"/>
</dbReference>
<dbReference type="HOGENOM" id="CLU_060296_1_2_10"/>
<dbReference type="OrthoDB" id="9808289at2"/>
<dbReference type="Proteomes" id="UP000000755">
    <property type="component" value="Chromosome"/>
</dbReference>
<dbReference type="GO" id="GO:0005886">
    <property type="term" value="C:plasma membrane"/>
    <property type="evidence" value="ECO:0007669"/>
    <property type="project" value="UniProtKB-SubCell"/>
</dbReference>
<dbReference type="GO" id="GO:0050380">
    <property type="term" value="F:undecaprenyl-diphosphatase activity"/>
    <property type="evidence" value="ECO:0007669"/>
    <property type="project" value="UniProtKB-UniRule"/>
</dbReference>
<dbReference type="GO" id="GO:0071555">
    <property type="term" value="P:cell wall organization"/>
    <property type="evidence" value="ECO:0007669"/>
    <property type="project" value="UniProtKB-KW"/>
</dbReference>
<dbReference type="GO" id="GO:0009252">
    <property type="term" value="P:peptidoglycan biosynthetic process"/>
    <property type="evidence" value="ECO:0007669"/>
    <property type="project" value="UniProtKB-KW"/>
</dbReference>
<dbReference type="GO" id="GO:0008360">
    <property type="term" value="P:regulation of cell shape"/>
    <property type="evidence" value="ECO:0007669"/>
    <property type="project" value="UniProtKB-KW"/>
</dbReference>
<dbReference type="GO" id="GO:0046677">
    <property type="term" value="P:response to antibiotic"/>
    <property type="evidence" value="ECO:0007669"/>
    <property type="project" value="UniProtKB-UniRule"/>
</dbReference>
<dbReference type="HAMAP" id="MF_01006">
    <property type="entry name" value="Undec_diphosphatase"/>
    <property type="match status" value="1"/>
</dbReference>
<dbReference type="InterPro" id="IPR003824">
    <property type="entry name" value="UppP"/>
</dbReference>
<dbReference type="PANTHER" id="PTHR30622">
    <property type="entry name" value="UNDECAPRENYL-DIPHOSPHATASE"/>
    <property type="match status" value="1"/>
</dbReference>
<dbReference type="PANTHER" id="PTHR30622:SF2">
    <property type="entry name" value="UNDECAPRENYL-DIPHOSPHATASE"/>
    <property type="match status" value="1"/>
</dbReference>
<dbReference type="Pfam" id="PF02673">
    <property type="entry name" value="BacA"/>
    <property type="match status" value="1"/>
</dbReference>
<reference key="1">
    <citation type="journal article" date="2006" name="Environ. Microbiol.">
        <title>Whole genome analysis of the marine Bacteroidetes'Gramella forsetii' reveals adaptations to degradation of polymeric organic matter.</title>
        <authorList>
            <person name="Bauer M."/>
            <person name="Kube M."/>
            <person name="Teeling H."/>
            <person name="Richter M."/>
            <person name="Lombardot T."/>
            <person name="Allers E."/>
            <person name="Wuerdemann C.A."/>
            <person name="Quast C."/>
            <person name="Kuhl H."/>
            <person name="Knaust F."/>
            <person name="Woebken D."/>
            <person name="Bischof K."/>
            <person name="Mussmann M."/>
            <person name="Choudhuri J.V."/>
            <person name="Meyer F."/>
            <person name="Reinhardt R."/>
            <person name="Amann R.I."/>
            <person name="Gloeckner F.O."/>
        </authorList>
    </citation>
    <scope>NUCLEOTIDE SEQUENCE [LARGE SCALE GENOMIC DNA]</scope>
    <source>
        <strain>DSM 17595 / CGMCC 1.15422 / KT0803</strain>
    </source>
</reference>
<proteinExistence type="inferred from homology"/>
<sequence>MDIFDAIVLGIIQGLTEFLPVSSSGHLELGKAILGDTSLPEESLLFTVVLHFATALSTLVVFRKDVFEIFSGLLKFKWNEETQFSLKIIISMLPAVIVGLLFEEQLEALFGGNILFVGFMLLITALLLWLADKAKDTGKKVSYRNAFIIGVSQAIAMLPGISRSGATISTSVLLGNDKTKAARFSFLMVVPLIFGKIAKDLMSGELMASSTDFSILATGFIAAFLAGLVACTWMISLVKKSKLSWFAIYCFVVGLAAIIFAYAQ</sequence>
<keyword id="KW-0046">Antibiotic resistance</keyword>
<keyword id="KW-1003">Cell membrane</keyword>
<keyword id="KW-0133">Cell shape</keyword>
<keyword id="KW-0961">Cell wall biogenesis/degradation</keyword>
<keyword id="KW-0378">Hydrolase</keyword>
<keyword id="KW-0472">Membrane</keyword>
<keyword id="KW-0573">Peptidoglycan synthesis</keyword>
<keyword id="KW-0812">Transmembrane</keyword>
<keyword id="KW-1133">Transmembrane helix</keyword>
<gene>
    <name evidence="1" type="primary">uppP</name>
    <name type="ordered locus">GFO_3037</name>
</gene>
<feature type="chain" id="PRO_0000290712" description="Undecaprenyl-diphosphatase">
    <location>
        <begin position="1"/>
        <end position="264"/>
    </location>
</feature>
<feature type="transmembrane region" description="Helical" evidence="1">
    <location>
        <begin position="42"/>
        <end position="62"/>
    </location>
</feature>
<feature type="transmembrane region" description="Helical" evidence="1">
    <location>
        <begin position="82"/>
        <end position="102"/>
    </location>
</feature>
<feature type="transmembrane region" description="Helical" evidence="1">
    <location>
        <begin position="109"/>
        <end position="129"/>
    </location>
</feature>
<feature type="transmembrane region" description="Helical" evidence="1">
    <location>
        <begin position="146"/>
        <end position="166"/>
    </location>
</feature>
<feature type="transmembrane region" description="Helical" evidence="1">
    <location>
        <begin position="184"/>
        <end position="204"/>
    </location>
</feature>
<feature type="transmembrane region" description="Helical" evidence="1">
    <location>
        <begin position="215"/>
        <end position="235"/>
    </location>
</feature>
<feature type="transmembrane region" description="Helical" evidence="1">
    <location>
        <begin position="243"/>
        <end position="263"/>
    </location>
</feature>
<organism>
    <name type="scientific">Christiangramia forsetii (strain DSM 17595 / CGMCC 1.15422 / KT0803)</name>
    <name type="common">Gramella forsetii</name>
    <dbReference type="NCBI Taxonomy" id="411154"/>
    <lineage>
        <taxon>Bacteria</taxon>
        <taxon>Pseudomonadati</taxon>
        <taxon>Bacteroidota</taxon>
        <taxon>Flavobacteriia</taxon>
        <taxon>Flavobacteriales</taxon>
        <taxon>Flavobacteriaceae</taxon>
        <taxon>Christiangramia</taxon>
    </lineage>
</organism>